<sequence length="1485" mass="169861">MIERGKFRSLTLVNWNGFFARTFDLDELVTTLSGGNGAGKSTTMAAFVTALIPDLTLLHFRNTTEAGATSGSRDKGLHGKLRAGVCYSTLDVVNSRHQRVVVGVRLQQVAGRDRKVDIKPFTIQGLPTAIQPTEILTELVAERQARVLSLPELKERVEAMEGVQFKQFNSITDYHSLMFDLGVIPKRLRSSADRSKFYRLIEASLYGGISSAITRSLRDYLLPENSGVRKAFQDMEAALRENRMTLEAIRVTQSDRDLFKHLISEATSYVAADYMRHANERRIHLDSALVLRRDLFSSRKQLVTEQYRHVEMSRELAEQSGAESDLETDYQAASDHLNLVQTAMRQQEKIERYQSDLEELTYRLEEQSEVVSEASEQQADNEARAEAAELEVDELKSQLADYQQALDVQQTRAIQYQQALQALERARALCQLPELTADNAEEWLETFHAKEQEATESLLQLEQKLSVADAAHSQFEQAYQLVVNIAGEVSRSEAWQTARELLRDWPSQQHLAERVQPLRMRLSELEQRLRAQQDAERLLQEFCKRQGNAYQPEELEALQRELESQVEELSLSVSDAGERRMAMRQELEQLKLKIQELTARAPVWLAAQDALSQLSEQSGEALEDSRQVTEYMQQLLERERETTVERDEIAASKRAIEAQIERLSQPSGAEDARLIALAERFGGVLLSEIYDDVTIDDAPYFSALYGPSRHGIVVPDLSLVREHLQGLDDCPEDLYLIEGDPQSFDDSVFAVEEHEKAVVVKIADRQWRYSRYPEVPLFGRAARENRLETLYQERDRLAERYATLSFDVQKTQRTHQAFSRFIGSHLAVAFDADPEAEIRLLNTRRGEIERALNAHEDQNQQQRQQFDQAKEGISALNRLIPLVSLLLDETLADRVEEITEELAEAQEAARYIQQHGVSLTKLEPLLSVLQSDPQQHEQLQESYVLAQNSQRLAKQQAFALTEVVQRRAHFSYTDSAGMLTENSDLNDKLRQRLEQAEAERTRAREQLRQYQSQFTQYSQVLASLKSSYDAKRDMLKELSQELVDIGVPADANAEARARARRDELHAALSTNRSRRNQLEKQLTFCEAEMDSLQKKLRKLERDYHQIREQVVNAKAGWCAVMRMVKDNGVERRLHRRELAYMDGDELRSMSDKALGALRLAVADNEHLRDVLRLSEDPKRPERKIQFYIAVYQHLRERIRQDIIRTDDPVEAIEQMEIELGRLTEELTAREQKLAISSKSVSNIIRKTIHREQNRIRMLNQGLQAVSFGQVKSVRLNVNVREAHATLLDVLSEQQEQHQDLFNSNRLTFSEALAKLYQRLNPQMDMGQRLPQTIGEELLDYRNYLELEVEVYRGADGWLRAESGALSTGEAIGTGMSILVMVVQSWEEESRRLRGKDISPCRLLFLDEAARLDAKSIATLFELCERLEMQLIIAAPENISPEKGTTYKLVRKVFQNHEHVHVVGLRGFANEIPSLPPIAAELQQGG</sequence>
<organism>
    <name type="scientific">Yersinia pseudotuberculosis serotype O:1b (strain IP 31758)</name>
    <dbReference type="NCBI Taxonomy" id="349747"/>
    <lineage>
        <taxon>Bacteria</taxon>
        <taxon>Pseudomonadati</taxon>
        <taxon>Pseudomonadota</taxon>
        <taxon>Gammaproteobacteria</taxon>
        <taxon>Enterobacterales</taxon>
        <taxon>Yersiniaceae</taxon>
        <taxon>Yersinia</taxon>
    </lineage>
</organism>
<reference key="1">
    <citation type="journal article" date="2007" name="PLoS Genet.">
        <title>The complete genome sequence of Yersinia pseudotuberculosis IP31758, the causative agent of Far East scarlet-like fever.</title>
        <authorList>
            <person name="Eppinger M."/>
            <person name="Rosovitz M.J."/>
            <person name="Fricke W.F."/>
            <person name="Rasko D.A."/>
            <person name="Kokorina G."/>
            <person name="Fayolle C."/>
            <person name="Lindler L.E."/>
            <person name="Carniel E."/>
            <person name="Ravel J."/>
        </authorList>
    </citation>
    <scope>NUCLEOTIDE SEQUENCE [LARGE SCALE GENOMIC DNA]</scope>
    <source>
        <strain>IP 31758</strain>
    </source>
</reference>
<proteinExistence type="inferred from homology"/>
<accession>A7FJV2</accession>
<keyword id="KW-0067">ATP-binding</keyword>
<keyword id="KW-0131">Cell cycle</keyword>
<keyword id="KW-0132">Cell division</keyword>
<keyword id="KW-0159">Chromosome partition</keyword>
<keyword id="KW-0175">Coiled coil</keyword>
<keyword id="KW-0963">Cytoplasm</keyword>
<keyword id="KW-0226">DNA condensation</keyword>
<keyword id="KW-0238">DNA-binding</keyword>
<keyword id="KW-0547">Nucleotide-binding</keyword>
<gene>
    <name evidence="1" type="primary">mukB</name>
    <name type="ordered locus">YpsIP31758_2565</name>
</gene>
<protein>
    <recommendedName>
        <fullName evidence="1">Chromosome partition protein MukB</fullName>
    </recommendedName>
    <alternativeName>
        <fullName evidence="1">Structural maintenance of chromosome-related protein</fullName>
    </alternativeName>
</protein>
<evidence type="ECO:0000255" key="1">
    <source>
        <dbReference type="HAMAP-Rule" id="MF_01800"/>
    </source>
</evidence>
<name>MUKB_YERP3</name>
<comment type="function">
    <text evidence="1">Plays a central role in chromosome condensation, segregation and cell cycle progression. Functions as a homodimer, which is essential for chromosome partition. Involved in negative DNA supercoiling in vivo, and by this means organize and compact chromosomes. May achieve or facilitate chromosome segregation by condensation DNA from both sides of a centrally located replisome during cell division.</text>
</comment>
<comment type="subunit">
    <text evidence="1">Homodimerization via its hinge domain. Binds to DNA via its C-terminal region. Interacts, and probably forms a ternary complex, with MukE and MukF via its C-terminal region. The complex formation is stimulated by calcium or magnesium. Interacts with tubulin-related protein FtsZ.</text>
</comment>
<comment type="subcellular location">
    <subcellularLocation>
        <location evidence="1">Cytoplasm</location>
        <location evidence="1">Nucleoid</location>
    </subcellularLocation>
    <text evidence="1">Restricted to the nucleoid region.</text>
</comment>
<comment type="domain">
    <text evidence="1">The hinge domain, which separates the large intramolecular coiled coil regions, allows the homodimerization, forming a V-shaped homodimer.</text>
</comment>
<comment type="similarity">
    <text evidence="1">Belongs to the SMC family. MukB subfamily.</text>
</comment>
<feature type="chain" id="PRO_1000069918" description="Chromosome partition protein MukB">
    <location>
        <begin position="1"/>
        <end position="1485"/>
    </location>
</feature>
<feature type="region of interest" description="Flexible hinge" evidence="1">
    <location>
        <begin position="666"/>
        <end position="783"/>
    </location>
</feature>
<feature type="coiled-coil region" evidence="1">
    <location>
        <begin position="337"/>
        <end position="480"/>
    </location>
</feature>
<feature type="coiled-coil region" evidence="1">
    <location>
        <begin position="509"/>
        <end position="605"/>
    </location>
</feature>
<feature type="coiled-coil region" evidence="1">
    <location>
        <begin position="780"/>
        <end position="805"/>
    </location>
</feature>
<feature type="coiled-coil region" evidence="1">
    <location>
        <begin position="835"/>
        <end position="915"/>
    </location>
</feature>
<feature type="coiled-coil region" evidence="1">
    <location>
        <begin position="977"/>
        <end position="1116"/>
    </location>
</feature>
<feature type="coiled-coil region" evidence="1">
    <location>
        <begin position="1210"/>
        <end position="1235"/>
    </location>
</feature>
<feature type="binding site" evidence="1">
    <location>
        <begin position="34"/>
        <end position="41"/>
    </location>
    <ligand>
        <name>ATP</name>
        <dbReference type="ChEBI" id="CHEBI:30616"/>
    </ligand>
</feature>
<dbReference type="EMBL" id="CP000720">
    <property type="protein sequence ID" value="ABS46671.1"/>
    <property type="molecule type" value="Genomic_DNA"/>
</dbReference>
<dbReference type="RefSeq" id="WP_012105376.1">
    <property type="nucleotide sequence ID" value="NC_009708.1"/>
</dbReference>
<dbReference type="SMR" id="A7FJV2"/>
<dbReference type="KEGG" id="ypi:YpsIP31758_2565"/>
<dbReference type="HOGENOM" id="CLU_004430_0_0_6"/>
<dbReference type="Proteomes" id="UP000002412">
    <property type="component" value="Chromosome"/>
</dbReference>
<dbReference type="GO" id="GO:0005737">
    <property type="term" value="C:cytoplasm"/>
    <property type="evidence" value="ECO:0007669"/>
    <property type="project" value="UniProtKB-UniRule"/>
</dbReference>
<dbReference type="GO" id="GO:0009295">
    <property type="term" value="C:nucleoid"/>
    <property type="evidence" value="ECO:0007669"/>
    <property type="project" value="UniProtKB-SubCell"/>
</dbReference>
<dbReference type="GO" id="GO:0005524">
    <property type="term" value="F:ATP binding"/>
    <property type="evidence" value="ECO:0007669"/>
    <property type="project" value="UniProtKB-UniRule"/>
</dbReference>
<dbReference type="GO" id="GO:0003677">
    <property type="term" value="F:DNA binding"/>
    <property type="evidence" value="ECO:0007669"/>
    <property type="project" value="UniProtKB-UniRule"/>
</dbReference>
<dbReference type="GO" id="GO:0051301">
    <property type="term" value="P:cell division"/>
    <property type="evidence" value="ECO:0007669"/>
    <property type="project" value="UniProtKB-KW"/>
</dbReference>
<dbReference type="GO" id="GO:0030261">
    <property type="term" value="P:chromosome condensation"/>
    <property type="evidence" value="ECO:0007669"/>
    <property type="project" value="UniProtKB-KW"/>
</dbReference>
<dbReference type="GO" id="GO:0007059">
    <property type="term" value="P:chromosome segregation"/>
    <property type="evidence" value="ECO:0007669"/>
    <property type="project" value="UniProtKB-UniRule"/>
</dbReference>
<dbReference type="GO" id="GO:0006260">
    <property type="term" value="P:DNA replication"/>
    <property type="evidence" value="ECO:0007669"/>
    <property type="project" value="UniProtKB-UniRule"/>
</dbReference>
<dbReference type="FunFam" id="3.30.70.3500:FF:000001">
    <property type="entry name" value="Chromosome partition protein MukB"/>
    <property type="match status" value="1"/>
</dbReference>
<dbReference type="FunFam" id="3.40.1140.10:FF:000001">
    <property type="entry name" value="Chromosome partition protein MukB"/>
    <property type="match status" value="1"/>
</dbReference>
<dbReference type="FunFam" id="3.40.1140.10:FF:000002">
    <property type="entry name" value="Chromosome partition protein MukB"/>
    <property type="match status" value="1"/>
</dbReference>
<dbReference type="Gene3D" id="1.10.287.1490">
    <property type="match status" value="1"/>
</dbReference>
<dbReference type="Gene3D" id="1.20.58.850">
    <property type="match status" value="1"/>
</dbReference>
<dbReference type="Gene3D" id="3.40.1140.10">
    <property type="match status" value="2"/>
</dbReference>
<dbReference type="Gene3D" id="1.20.5.420">
    <property type="entry name" value="Immunoglobulin FC, subunit C"/>
    <property type="match status" value="1"/>
</dbReference>
<dbReference type="Gene3D" id="3.30.70.3500">
    <property type="entry name" value="MukB, hinge domain"/>
    <property type="match status" value="1"/>
</dbReference>
<dbReference type="HAMAP" id="MF_01800">
    <property type="entry name" value="MukB"/>
    <property type="match status" value="1"/>
</dbReference>
<dbReference type="InterPro" id="IPR012090">
    <property type="entry name" value="MukB"/>
</dbReference>
<dbReference type="InterPro" id="IPR050308">
    <property type="entry name" value="MukB/SMC"/>
</dbReference>
<dbReference type="InterPro" id="IPR032520">
    <property type="entry name" value="MukB_hinge"/>
</dbReference>
<dbReference type="InterPro" id="IPR042501">
    <property type="entry name" value="MukB_hinge_sf"/>
</dbReference>
<dbReference type="InterPro" id="IPR007406">
    <property type="entry name" value="MukB_N_dom"/>
</dbReference>
<dbReference type="InterPro" id="IPR027417">
    <property type="entry name" value="P-loop_NTPase"/>
</dbReference>
<dbReference type="NCBIfam" id="NF003422">
    <property type="entry name" value="PRK04863.1"/>
    <property type="match status" value="1"/>
</dbReference>
<dbReference type="PANTHER" id="PTHR42963">
    <property type="entry name" value="CHROMOSOME PARTITION PROTEIN MUKB"/>
    <property type="match status" value="1"/>
</dbReference>
<dbReference type="PANTHER" id="PTHR42963:SF1">
    <property type="entry name" value="DUF4476 DOMAIN-CONTAINING PROTEIN"/>
    <property type="match status" value="1"/>
</dbReference>
<dbReference type="Pfam" id="PF04310">
    <property type="entry name" value="MukB"/>
    <property type="match status" value="1"/>
</dbReference>
<dbReference type="Pfam" id="PF16330">
    <property type="entry name" value="MukB_hinge"/>
    <property type="match status" value="1"/>
</dbReference>
<dbReference type="Pfam" id="PF13558">
    <property type="entry name" value="SbcC_Walker_B"/>
    <property type="match status" value="1"/>
</dbReference>
<dbReference type="PIRSF" id="PIRSF005246">
    <property type="entry name" value="MukB"/>
    <property type="match status" value="1"/>
</dbReference>
<dbReference type="SUPFAM" id="SSF52540">
    <property type="entry name" value="P-loop containing nucleoside triphosphate hydrolases"/>
    <property type="match status" value="2"/>
</dbReference>